<protein>
    <recommendedName>
        <fullName>Excitatory amino acid transporter 2</fullName>
    </recommendedName>
    <alternativeName>
        <fullName evidence="13 14">GLT-1</fullName>
    </alternativeName>
    <alternativeName>
        <fullName>Sodium-dependent glutamate/aspartate transporter 2</fullName>
    </alternativeName>
    <alternativeName>
        <fullName>Solute carrier family 1 member 2</fullName>
    </alternativeName>
</protein>
<gene>
    <name type="primary">Slc1a2</name>
    <name type="synonym">Eaat2</name>
    <name type="synonym">Glt1</name>
</gene>
<evidence type="ECO:0000250" key="1">
    <source>
        <dbReference type="UniProtKB" id="O59010"/>
    </source>
</evidence>
<evidence type="ECO:0000250" key="2">
    <source>
        <dbReference type="UniProtKB" id="P31596"/>
    </source>
</evidence>
<evidence type="ECO:0000250" key="3">
    <source>
        <dbReference type="UniProtKB" id="P43003"/>
    </source>
</evidence>
<evidence type="ECO:0000250" key="4">
    <source>
        <dbReference type="UniProtKB" id="P43004"/>
    </source>
</evidence>
<evidence type="ECO:0000255" key="5"/>
<evidence type="ECO:0000256" key="6">
    <source>
        <dbReference type="SAM" id="MobiDB-lite"/>
    </source>
</evidence>
<evidence type="ECO:0000269" key="7">
    <source>
    </source>
</evidence>
<evidence type="ECO:0000269" key="8">
    <source>
    </source>
</evidence>
<evidence type="ECO:0000269" key="9">
    <source>
    </source>
</evidence>
<evidence type="ECO:0000269" key="10">
    <source>
    </source>
</evidence>
<evidence type="ECO:0000269" key="11">
    <source>
    </source>
</evidence>
<evidence type="ECO:0000269" key="12">
    <source>
    </source>
</evidence>
<evidence type="ECO:0000303" key="13">
    <source>
    </source>
</evidence>
<evidence type="ECO:0000303" key="14">
    <source>
    </source>
</evidence>
<evidence type="ECO:0000305" key="15"/>
<evidence type="ECO:0000305" key="16">
    <source>
    </source>
</evidence>
<evidence type="ECO:0007744" key="17">
    <source>
    </source>
</evidence>
<evidence type="ECO:0007744" key="18">
    <source>
    </source>
</evidence>
<sequence>MASTEGANNMPKQVEVRMHDSHLSSDEPKHRNLGMRMCDKLGKNLLLSLTVFGVILGAVCGGLLRLASPIHPDVVMLIAFPGDILMRMLKMLILPLIISSLITGLSGLDAKASGRLGTRAMVYYMSTTIIAAVLGVILVLAIHPGNPKLKKQLGPGKKNDEVSSLDAFLDLIRNLFPENLVQACFQQIQTVTKKVLVAPPSEEANTTKAVISMLNETMNEAPEETKIVIKKGLEFKDGMNVLGLIGFFIAFGIAMGKMGEQAKLMVEFFNILNEIVMKLVIMIMWYSPLGIACLICGKIIAIKDLEVVARQLGMYMITVIVGLIIHGGIFLPLIYFVVTRKNPFSFFAGIFQAWITALGTASSAGTLPVTFRCLEDNLGIDKRVTRFVLPVGATINMDGTALYEAVAAIFIAQMNGVILDGGQIVTVSLTATLASIGAASIPSAGLVTMLLILTAVGLPTEDISLLVAVDWLLDRMRTSVNVVGDSFGAGIVYHLSKSELDTIDSQHRMQEDIEMTKTQSIYDDKNHRESNSNQCVYAAHNSVVIDECKVTLAANGKSADCSVEEEPWKREK</sequence>
<name>EAA2_MOUSE</name>
<organism>
    <name type="scientific">Mus musculus</name>
    <name type="common">Mouse</name>
    <dbReference type="NCBI Taxonomy" id="10090"/>
    <lineage>
        <taxon>Eukaryota</taxon>
        <taxon>Metazoa</taxon>
        <taxon>Chordata</taxon>
        <taxon>Craniata</taxon>
        <taxon>Vertebrata</taxon>
        <taxon>Euteleostomi</taxon>
        <taxon>Mammalia</taxon>
        <taxon>Eutheria</taxon>
        <taxon>Euarchontoglires</taxon>
        <taxon>Glires</taxon>
        <taxon>Rodentia</taxon>
        <taxon>Myomorpha</taxon>
        <taxon>Muroidea</taxon>
        <taxon>Muridae</taxon>
        <taxon>Murinae</taxon>
        <taxon>Mus</taxon>
        <taxon>Mus</taxon>
    </lineage>
</organism>
<accession>P43006</accession>
<accession>O35877</accession>
<accession>O54686</accession>
<accession>O54687</accession>
<dbReference type="EMBL" id="U11763">
    <property type="protein sequence ID" value="AAA77673.1"/>
    <property type="molecule type" value="mRNA"/>
</dbReference>
<dbReference type="EMBL" id="D43796">
    <property type="protein sequence ID" value="BAA07854.1"/>
    <property type="molecule type" value="mRNA"/>
</dbReference>
<dbReference type="EMBL" id="U24699">
    <property type="protein sequence ID" value="AAA91643.1"/>
    <property type="molecule type" value="mRNA"/>
</dbReference>
<dbReference type="EMBL" id="U75372">
    <property type="protein sequence ID" value="AAB71737.1"/>
    <property type="molecule type" value="mRNA"/>
</dbReference>
<dbReference type="EMBL" id="U75373">
    <property type="protein sequence ID" value="AAB71738.1"/>
    <property type="molecule type" value="mRNA"/>
</dbReference>
<dbReference type="EMBL" id="AB007810">
    <property type="protein sequence ID" value="BAA23770.1"/>
    <property type="molecule type" value="mRNA"/>
</dbReference>
<dbReference type="EMBL" id="AB007811">
    <property type="protein sequence ID" value="BAA23771.1"/>
    <property type="molecule type" value="mRNA"/>
</dbReference>
<dbReference type="EMBL" id="AB007812">
    <property type="protein sequence ID" value="BAA23772.1"/>
    <property type="molecule type" value="mRNA"/>
</dbReference>
<dbReference type="CCDS" id="CCDS16469.1">
    <molecule id="P43006-3"/>
</dbReference>
<dbReference type="CCDS" id="CCDS38188.1">
    <molecule id="P43006-1"/>
</dbReference>
<dbReference type="CCDS" id="CCDS38189.1">
    <molecule id="P43006-2"/>
</dbReference>
<dbReference type="PIR" id="A55676">
    <property type="entry name" value="A55676"/>
</dbReference>
<dbReference type="PIR" id="JC4262">
    <property type="entry name" value="JC4262"/>
</dbReference>
<dbReference type="RefSeq" id="NP_001070982.1">
    <molecule id="P43006-1"/>
    <property type="nucleotide sequence ID" value="NM_001077514.4"/>
</dbReference>
<dbReference type="RefSeq" id="NP_001070983.1">
    <molecule id="P43006-2"/>
    <property type="nucleotide sequence ID" value="NM_001077515.2"/>
</dbReference>
<dbReference type="RefSeq" id="NP_035523.1">
    <molecule id="P43006-3"/>
    <property type="nucleotide sequence ID" value="NM_011393.2"/>
</dbReference>
<dbReference type="SMR" id="P43006"/>
<dbReference type="BioGRID" id="203290">
    <property type="interactions" value="40"/>
</dbReference>
<dbReference type="FunCoup" id="P43006">
    <property type="interactions" value="390"/>
</dbReference>
<dbReference type="IntAct" id="P43006">
    <property type="interactions" value="6"/>
</dbReference>
<dbReference type="MINT" id="P43006"/>
<dbReference type="STRING" id="10090.ENSMUSP00000079100"/>
<dbReference type="GlyConnect" id="2306">
    <property type="glycosylation" value="13 N-Linked glycans (2 sites)"/>
</dbReference>
<dbReference type="GlyCosmos" id="P43006">
    <property type="glycosylation" value="2 sites, 13 glycans"/>
</dbReference>
<dbReference type="GlyGen" id="P43006">
    <property type="glycosylation" value="5 sites, 14 N-linked glycans (2 sites), 1 O-linked glycan (3 sites)"/>
</dbReference>
<dbReference type="iPTMnet" id="P43006"/>
<dbReference type="PhosphoSitePlus" id="P43006"/>
<dbReference type="SwissPalm" id="P43006"/>
<dbReference type="jPOST" id="P43006"/>
<dbReference type="PaxDb" id="10090-ENSMUSP00000079100"/>
<dbReference type="PeptideAtlas" id="P43006"/>
<dbReference type="ProteomicsDB" id="277747">
    <molecule id="P43006-1"/>
</dbReference>
<dbReference type="ProteomicsDB" id="277748">
    <molecule id="P43006-2"/>
</dbReference>
<dbReference type="ProteomicsDB" id="277749">
    <molecule id="P43006-3"/>
</dbReference>
<dbReference type="Antibodypedia" id="2179">
    <property type="antibodies" value="324 antibodies from 33 providers"/>
</dbReference>
<dbReference type="DNASU" id="20511"/>
<dbReference type="Ensembl" id="ENSMUST00000005220.11">
    <molecule id="P43006-3"/>
    <property type="protein sequence ID" value="ENSMUSP00000005220.5"/>
    <property type="gene ID" value="ENSMUSG00000005089.16"/>
</dbReference>
<dbReference type="Ensembl" id="ENSMUST00000080210.10">
    <molecule id="P43006-1"/>
    <property type="protein sequence ID" value="ENSMUSP00000079100.4"/>
    <property type="gene ID" value="ENSMUSG00000005089.16"/>
</dbReference>
<dbReference type="Ensembl" id="ENSMUST00000111212.8">
    <molecule id="P43006-2"/>
    <property type="protein sequence ID" value="ENSMUSP00000106843.2"/>
    <property type="gene ID" value="ENSMUSG00000005089.16"/>
</dbReference>
<dbReference type="GeneID" id="20511"/>
<dbReference type="KEGG" id="mmu:20511"/>
<dbReference type="UCSC" id="uc008lid.2">
    <molecule id="P43006-1"/>
    <property type="organism name" value="mouse"/>
</dbReference>
<dbReference type="AGR" id="MGI:101931"/>
<dbReference type="CTD" id="6506"/>
<dbReference type="MGI" id="MGI:101931">
    <property type="gene designation" value="Slc1a2"/>
</dbReference>
<dbReference type="VEuPathDB" id="HostDB:ENSMUSG00000005089"/>
<dbReference type="eggNOG" id="KOG3787">
    <property type="taxonomic scope" value="Eukaryota"/>
</dbReference>
<dbReference type="GeneTree" id="ENSGT00940000155379"/>
<dbReference type="HOGENOM" id="CLU_019375_3_2_1"/>
<dbReference type="InParanoid" id="P43006"/>
<dbReference type="OMA" id="TWTKEID"/>
<dbReference type="OrthoDB" id="5877963at2759"/>
<dbReference type="PhylomeDB" id="P43006"/>
<dbReference type="TreeFam" id="TF315206"/>
<dbReference type="Reactome" id="R-MMU-210455">
    <property type="pathway name" value="Astrocytic Glutamate-Glutamine Uptake And Metabolism"/>
</dbReference>
<dbReference type="Reactome" id="R-MMU-210500">
    <property type="pathway name" value="Glutamate Neurotransmitter Release Cycle"/>
</dbReference>
<dbReference type="Reactome" id="R-MMU-425393">
    <property type="pathway name" value="Transport of inorganic cations/anions and amino acids/oligopeptides"/>
</dbReference>
<dbReference type="BioGRID-ORCS" id="20511">
    <property type="hits" value="0 hits in 78 CRISPR screens"/>
</dbReference>
<dbReference type="CD-CODE" id="CE726F99">
    <property type="entry name" value="Postsynaptic density"/>
</dbReference>
<dbReference type="ChiTaRS" id="Slc1a2">
    <property type="organism name" value="mouse"/>
</dbReference>
<dbReference type="PRO" id="PR:P43006"/>
<dbReference type="Proteomes" id="UP000000589">
    <property type="component" value="Chromosome 2"/>
</dbReference>
<dbReference type="RNAct" id="P43006">
    <property type="molecule type" value="protein"/>
</dbReference>
<dbReference type="Bgee" id="ENSMUSG00000005089">
    <property type="expression patterns" value="Expressed in lateral septal nucleus and 148 other cell types or tissues"/>
</dbReference>
<dbReference type="ExpressionAtlas" id="P43006">
    <property type="expression patterns" value="baseline and differential"/>
</dbReference>
<dbReference type="GO" id="GO:0097449">
    <property type="term" value="C:astrocyte projection"/>
    <property type="evidence" value="ECO:0000314"/>
    <property type="project" value="ARUK-UCL"/>
</dbReference>
<dbReference type="GO" id="GO:0030673">
    <property type="term" value="C:axolemma"/>
    <property type="evidence" value="ECO:0000314"/>
    <property type="project" value="MGI"/>
</dbReference>
<dbReference type="GO" id="GO:0030424">
    <property type="term" value="C:axon"/>
    <property type="evidence" value="ECO:0000314"/>
    <property type="project" value="MGI"/>
</dbReference>
<dbReference type="GO" id="GO:0044297">
    <property type="term" value="C:cell body"/>
    <property type="evidence" value="ECO:0000314"/>
    <property type="project" value="ARUK-UCL"/>
</dbReference>
<dbReference type="GO" id="GO:0009986">
    <property type="term" value="C:cell surface"/>
    <property type="evidence" value="ECO:0007669"/>
    <property type="project" value="Ensembl"/>
</dbReference>
<dbReference type="GO" id="GO:0098978">
    <property type="term" value="C:glutamatergic synapse"/>
    <property type="evidence" value="ECO:0000314"/>
    <property type="project" value="SynGO"/>
</dbReference>
<dbReference type="GO" id="GO:0016020">
    <property type="term" value="C:membrane"/>
    <property type="evidence" value="ECO:0000314"/>
    <property type="project" value="MGI"/>
</dbReference>
<dbReference type="GO" id="GO:0098796">
    <property type="term" value="C:membrane protein complex"/>
    <property type="evidence" value="ECO:0007669"/>
    <property type="project" value="Ensembl"/>
</dbReference>
<dbReference type="GO" id="GO:0045121">
    <property type="term" value="C:membrane raft"/>
    <property type="evidence" value="ECO:0000314"/>
    <property type="project" value="MGI"/>
</dbReference>
<dbReference type="GO" id="GO:0044306">
    <property type="term" value="C:neuron projection terminus"/>
    <property type="evidence" value="ECO:0000314"/>
    <property type="project" value="MGI"/>
</dbReference>
<dbReference type="GO" id="GO:0005886">
    <property type="term" value="C:plasma membrane"/>
    <property type="evidence" value="ECO:0000314"/>
    <property type="project" value="MGI"/>
</dbReference>
<dbReference type="GO" id="GO:0042734">
    <property type="term" value="C:presynaptic membrane"/>
    <property type="evidence" value="ECO:0007669"/>
    <property type="project" value="Ensembl"/>
</dbReference>
<dbReference type="GO" id="GO:0045202">
    <property type="term" value="C:synapse"/>
    <property type="evidence" value="ECO:0000314"/>
    <property type="project" value="MGI"/>
</dbReference>
<dbReference type="GO" id="GO:0031982">
    <property type="term" value="C:vesicle"/>
    <property type="evidence" value="ECO:0000314"/>
    <property type="project" value="MGI"/>
</dbReference>
<dbReference type="GO" id="GO:0033229">
    <property type="term" value="F:cysteine transmembrane transporter activity"/>
    <property type="evidence" value="ECO:0000314"/>
    <property type="project" value="MGI"/>
</dbReference>
<dbReference type="GO" id="GO:0015501">
    <property type="term" value="F:glutamate:sodium symporter activity"/>
    <property type="evidence" value="ECO:0000314"/>
    <property type="project" value="MGI"/>
</dbReference>
<dbReference type="GO" id="GO:0005314">
    <property type="term" value="F:high-affinity L-glutamate transmembrane transporter activity"/>
    <property type="evidence" value="ECO:0000314"/>
    <property type="project" value="UniProtKB"/>
</dbReference>
<dbReference type="GO" id="GO:0005313">
    <property type="term" value="F:L-glutamate transmembrane transporter activity"/>
    <property type="evidence" value="ECO:0000314"/>
    <property type="project" value="MGI"/>
</dbReference>
<dbReference type="GO" id="GO:0046872">
    <property type="term" value="F:metal ion binding"/>
    <property type="evidence" value="ECO:0007669"/>
    <property type="project" value="UniProtKB-KW"/>
</dbReference>
<dbReference type="GO" id="GO:0008509">
    <property type="term" value="F:monoatomic anion transmembrane transporter activity"/>
    <property type="evidence" value="ECO:0000314"/>
    <property type="project" value="MGI"/>
</dbReference>
<dbReference type="GO" id="GO:0030534">
    <property type="term" value="P:adult behavior"/>
    <property type="evidence" value="ECO:0000315"/>
    <property type="project" value="MGI"/>
</dbReference>
<dbReference type="GO" id="GO:0071314">
    <property type="term" value="P:cellular response to cocaine"/>
    <property type="evidence" value="ECO:0000314"/>
    <property type="project" value="MGI"/>
</dbReference>
<dbReference type="GO" id="GO:0070779">
    <property type="term" value="P:D-aspartate import across plasma membrane"/>
    <property type="evidence" value="ECO:0007669"/>
    <property type="project" value="Ensembl"/>
</dbReference>
<dbReference type="GO" id="GO:0006750">
    <property type="term" value="P:glutathione biosynthetic process"/>
    <property type="evidence" value="ECO:0000314"/>
    <property type="project" value="MGI"/>
</dbReference>
<dbReference type="GO" id="GO:0140009">
    <property type="term" value="P:L-aspartate import across plasma membrane"/>
    <property type="evidence" value="ECO:0007669"/>
    <property type="project" value="Ensembl"/>
</dbReference>
<dbReference type="GO" id="GO:0098712">
    <property type="term" value="P:L-glutamate import across plasma membrane"/>
    <property type="evidence" value="ECO:0000314"/>
    <property type="project" value="UniProtKB"/>
</dbReference>
<dbReference type="GO" id="GO:0015813">
    <property type="term" value="P:L-glutamate transmembrane transport"/>
    <property type="evidence" value="ECO:0000314"/>
    <property type="project" value="MGI"/>
</dbReference>
<dbReference type="GO" id="GO:0098656">
    <property type="term" value="P:monoatomic anion transmembrane transport"/>
    <property type="evidence" value="ECO:0000314"/>
    <property type="project" value="MGI"/>
</dbReference>
<dbReference type="GO" id="GO:0035264">
    <property type="term" value="P:multicellular organism growth"/>
    <property type="evidence" value="ECO:0000315"/>
    <property type="project" value="MGI"/>
</dbReference>
<dbReference type="GO" id="GO:0007399">
    <property type="term" value="P:nervous system development"/>
    <property type="evidence" value="ECO:0000315"/>
    <property type="project" value="MGI"/>
</dbReference>
<dbReference type="GO" id="GO:0098810">
    <property type="term" value="P:neurotransmitter reuptake"/>
    <property type="evidence" value="ECO:0000314"/>
    <property type="project" value="SynGO"/>
</dbReference>
<dbReference type="GO" id="GO:0046326">
    <property type="term" value="P:positive regulation of D-glucose import"/>
    <property type="evidence" value="ECO:0000315"/>
    <property type="project" value="MGI"/>
</dbReference>
<dbReference type="GO" id="GO:0070207">
    <property type="term" value="P:protein homotrimerization"/>
    <property type="evidence" value="ECO:0000250"/>
    <property type="project" value="UniProtKB"/>
</dbReference>
<dbReference type="GO" id="GO:0043200">
    <property type="term" value="P:response to amino acid"/>
    <property type="evidence" value="ECO:0000315"/>
    <property type="project" value="MGI"/>
</dbReference>
<dbReference type="GO" id="GO:0009416">
    <property type="term" value="P:response to light stimulus"/>
    <property type="evidence" value="ECO:0000315"/>
    <property type="project" value="MGI"/>
</dbReference>
<dbReference type="GO" id="GO:0009611">
    <property type="term" value="P:response to wounding"/>
    <property type="evidence" value="ECO:0000315"/>
    <property type="project" value="MGI"/>
</dbReference>
<dbReference type="GO" id="GO:0009410">
    <property type="term" value="P:response to xenobiotic stimulus"/>
    <property type="evidence" value="ECO:0000315"/>
    <property type="project" value="MGI"/>
</dbReference>
<dbReference type="GO" id="GO:0021537">
    <property type="term" value="P:telencephalon development"/>
    <property type="evidence" value="ECO:0000315"/>
    <property type="project" value="MGI"/>
</dbReference>
<dbReference type="GO" id="GO:0007632">
    <property type="term" value="P:visual behavior"/>
    <property type="evidence" value="ECO:0000315"/>
    <property type="project" value="MGI"/>
</dbReference>
<dbReference type="FunFam" id="1.10.3860.10:FF:000002">
    <property type="entry name" value="Amino acid transporter"/>
    <property type="match status" value="1"/>
</dbReference>
<dbReference type="Gene3D" id="1.10.3860.10">
    <property type="entry name" value="Sodium:dicarboxylate symporter"/>
    <property type="match status" value="1"/>
</dbReference>
<dbReference type="InterPro" id="IPR050746">
    <property type="entry name" value="DAACS"/>
</dbReference>
<dbReference type="InterPro" id="IPR001991">
    <property type="entry name" value="Na-dicarboxylate_symporter"/>
</dbReference>
<dbReference type="InterPro" id="IPR018107">
    <property type="entry name" value="Na-dicarboxylate_symporter_CS"/>
</dbReference>
<dbReference type="InterPro" id="IPR036458">
    <property type="entry name" value="Na:dicarbo_symporter_sf"/>
</dbReference>
<dbReference type="PANTHER" id="PTHR11958:SF93">
    <property type="entry name" value="EXCITATORY AMINO ACID TRANSPORTER 2"/>
    <property type="match status" value="1"/>
</dbReference>
<dbReference type="PANTHER" id="PTHR11958">
    <property type="entry name" value="SODIUM/DICARBOXYLATE SYMPORTER-RELATED"/>
    <property type="match status" value="1"/>
</dbReference>
<dbReference type="Pfam" id="PF00375">
    <property type="entry name" value="SDF"/>
    <property type="match status" value="1"/>
</dbReference>
<dbReference type="PRINTS" id="PR00173">
    <property type="entry name" value="EDTRNSPORT"/>
</dbReference>
<dbReference type="SUPFAM" id="SSF118215">
    <property type="entry name" value="Proton glutamate symport protein"/>
    <property type="match status" value="1"/>
</dbReference>
<dbReference type="PROSITE" id="PS00713">
    <property type="entry name" value="NA_DICARBOXYL_SYMP_1"/>
    <property type="match status" value="1"/>
</dbReference>
<dbReference type="PROSITE" id="PS00714">
    <property type="entry name" value="NA_DICARBOXYL_SYMP_2"/>
    <property type="match status" value="1"/>
</dbReference>
<keyword id="KW-0025">Alternative splicing</keyword>
<keyword id="KW-0029">Amino-acid transport</keyword>
<keyword id="KW-1003">Cell membrane</keyword>
<keyword id="KW-0868">Chloride</keyword>
<keyword id="KW-0903">Direct protein sequencing</keyword>
<keyword id="KW-0325">Glycoprotein</keyword>
<keyword id="KW-0449">Lipoprotein</keyword>
<keyword id="KW-0472">Membrane</keyword>
<keyword id="KW-0479">Metal-binding</keyword>
<keyword id="KW-0564">Palmitate</keyword>
<keyword id="KW-0597">Phosphoprotein</keyword>
<keyword id="KW-0630">Potassium</keyword>
<keyword id="KW-1185">Reference proteome</keyword>
<keyword id="KW-0915">Sodium</keyword>
<keyword id="KW-0769">Symport</keyword>
<keyword id="KW-0812">Transmembrane</keyword>
<keyword id="KW-1133">Transmembrane helix</keyword>
<keyword id="KW-0813">Transport</keyword>
<proteinExistence type="evidence at protein level"/>
<comment type="function">
    <text evidence="4 9 10 11 12">Sodium-dependent, high-affinity amino acid transporter that mediates the uptake of L-glutamate and also L-aspartate and D-aspartate (PubMed:7557442, PubMed:7698742, PubMed:9373176). Functions as a symporter that transports one amino acid molecule together with two or three Na(+) ions and one proton, in parallel with the counter-transport of one K(+) ion. Mediates Cl(-) flux that is not coupled to amino acid transport; this avoids the accumulation of negative charges due to aspartate and Na(+) symport (By similarity). Essential for the rapid removal of released glutamate from the synaptic cleft, and for terminating the postsynaptic action of glutamate (PubMed:9180080).</text>
</comment>
<comment type="catalytic activity">
    <reaction evidence="16">
        <text>K(+)(in) + L-glutamate(out) + 3 Na(+)(out) + H(+)(out) = K(+)(out) + L-glutamate(in) + 3 Na(+)(in) + H(+)(in)</text>
        <dbReference type="Rhea" id="RHEA:70699"/>
        <dbReference type="ChEBI" id="CHEBI:15378"/>
        <dbReference type="ChEBI" id="CHEBI:29101"/>
        <dbReference type="ChEBI" id="CHEBI:29103"/>
        <dbReference type="ChEBI" id="CHEBI:29985"/>
    </reaction>
</comment>
<comment type="catalytic activity">
    <reaction evidence="4">
        <text>K(+)(in) + L-aspartate(out) + 3 Na(+)(out) + H(+)(out) = K(+)(out) + L-aspartate(in) + 3 Na(+)(in) + H(+)(in)</text>
        <dbReference type="Rhea" id="RHEA:70851"/>
        <dbReference type="ChEBI" id="CHEBI:15378"/>
        <dbReference type="ChEBI" id="CHEBI:29101"/>
        <dbReference type="ChEBI" id="CHEBI:29103"/>
        <dbReference type="ChEBI" id="CHEBI:29991"/>
    </reaction>
</comment>
<comment type="catalytic activity">
    <reaction evidence="4">
        <text>D-aspartate(out) + K(+)(in) + 3 Na(+)(out) + H(+)(out) = D-aspartate(in) + K(+)(out) + 3 Na(+)(in) + H(+)(in)</text>
        <dbReference type="Rhea" id="RHEA:71379"/>
        <dbReference type="ChEBI" id="CHEBI:15378"/>
        <dbReference type="ChEBI" id="CHEBI:29101"/>
        <dbReference type="ChEBI" id="CHEBI:29103"/>
        <dbReference type="ChEBI" id="CHEBI:29990"/>
    </reaction>
</comment>
<comment type="subunit">
    <text evidence="2 4">Homotrimer (By similarity). Interacts with AJUBA (By similarity).</text>
</comment>
<comment type="subcellular location">
    <subcellularLocation>
        <location evidence="9 10 12">Cell membrane</location>
        <topology evidence="4">Multi-pass membrane protein</topology>
    </subcellularLocation>
</comment>
<comment type="alternative products">
    <event type="alternative splicing"/>
    <isoform>
        <id>P43006-1</id>
        <name>Glt-1</name>
        <sequence type="displayed"/>
    </isoform>
    <isoform>
        <id>P43006-2</id>
        <name>Glt-1A</name>
        <sequence type="described" ref="VSP_006264"/>
    </isoform>
    <isoform>
        <id>P43006-3</id>
        <name>Glt-1B</name>
        <sequence type="described" ref="VSP_006264 VSP_006265"/>
    </isoform>
</comment>
<comment type="tissue specificity">
    <text evidence="7 9 10 11 12">Detected in brain (PubMed:9180080). Detected in embryonic forebrain, especially in globus pallidus, perirhinal cortex, lateral hypothalamus, hippocampus, and on fimbria and axonal pathways connecting the neocortex, basal ganglia and thalamus (at protein level) (PubMed:16880397). Isoform GLT1 is expressed in the brain (PubMed:7557442, PubMed:7698742, PubMed:9180080, PubMed:9373176). Isoforms GLT-1A and GLT-1B are expressed in the liver (PubMed:9373176).</text>
</comment>
<comment type="domain">
    <text evidence="3">Contains eight transmembrane regions plus two helical hairpins that dip into the membrane. These helical hairpin structures play an important role in the transport process. The first enters the membrane from the cytoplasmic side, the second one from the extracellular side. During the transport cycle, the regions involved in amino acid transport, and especially the helical hairpins, move vertically by about 15-18 Angstroms, alternating between exposure to the aqueous phase and reinsertion in the lipid bilayer. In contrast, the regions involved in trimerization do not move.</text>
</comment>
<comment type="PTM">
    <text evidence="4">Glycosylated.</text>
</comment>
<comment type="PTM">
    <text evidence="8">Palmitoylation at Cys-38 is not required for correct subcellular localization, but is important for glutamate uptake activity.</text>
</comment>
<comment type="disruption phenotype">
    <text evidence="7 11">No visible phenotype at birth (PubMed:16880397, PubMed:9180080). Mice are born at the expected Mendelian rate, but gain weight more slowly, especially after the first 30 days after birth (PubMed:9180080). Only half of them are still alive 60 days after birth (PubMed:9180080). Death is due to spontaneous epileptic seizures (PubMed:9180080). Besides, mutant mice display neuronal degeneration in the hippocampus CA1 field, probably due to impaired glutamate removal from the synaptic cleft (PubMed:9180080). Glutamate uptake by synaptosomes from mutant mouse brain cortex is reduced by 94% (PubMed:9180080). Mice deficient in both Slc1a2 and Slc1a3 die at about 17 dpc; they display defects in the brain structure that affects the brain cortex, hippocampus and olfactory bulb, due to impaired radial migration of neurons into the cortical plate and disorganization of the radial glial cell arrangement (PubMed:16880397).</text>
</comment>
<comment type="similarity">
    <text evidence="15">Belongs to the dicarboxylate/amino acid:cation symporter (DAACS) (TC 2.A.23) family. SLC1A2 subfamily.</text>
</comment>
<feature type="chain" id="PRO_0000202062" description="Excitatory amino acid transporter 2">
    <location>
        <begin position="1"/>
        <end position="572"/>
    </location>
</feature>
<feature type="topological domain" description="Cytoplasmic" evidence="5">
    <location>
        <begin position="1"/>
        <end position="44"/>
    </location>
</feature>
<feature type="transmembrane region" description="Helical" evidence="5">
    <location>
        <begin position="45"/>
        <end position="64"/>
    </location>
</feature>
<feature type="transmembrane region" description="Helical" evidence="5">
    <location>
        <begin position="88"/>
        <end position="108"/>
    </location>
</feature>
<feature type="transmembrane region" description="Helical" evidence="5">
    <location>
        <begin position="121"/>
        <end position="142"/>
    </location>
</feature>
<feature type="transmembrane region" description="Helical; Name=4" evidence="3">
    <location>
        <begin position="235"/>
        <end position="258"/>
    </location>
</feature>
<feature type="transmembrane region" description="Helical; Name=5" evidence="3">
    <location>
        <begin position="268"/>
        <end position="295"/>
    </location>
</feature>
<feature type="transmembrane region" description="Helical; Name=6" evidence="3">
    <location>
        <begin position="317"/>
        <end position="338"/>
    </location>
</feature>
<feature type="intramembrane region" description="Discontinuously helical" evidence="3">
    <location>
        <begin position="344"/>
        <end position="374"/>
    </location>
</feature>
<feature type="transmembrane region" description="Helical; Name=7" evidence="3">
    <location>
        <begin position="384"/>
        <end position="410"/>
    </location>
</feature>
<feature type="intramembrane region" description="Discontinuously helical" evidence="3">
    <location>
        <begin position="424"/>
        <end position="457"/>
    </location>
</feature>
<feature type="transmembrane region" description="Helical; Name=8" evidence="3">
    <location>
        <begin position="471"/>
        <end position="492"/>
    </location>
</feature>
<feature type="region of interest" description="Disordered" evidence="6">
    <location>
        <begin position="1"/>
        <end position="28"/>
    </location>
</feature>
<feature type="compositionally biased region" description="Polar residues" evidence="6">
    <location>
        <begin position="1"/>
        <end position="11"/>
    </location>
</feature>
<feature type="compositionally biased region" description="Basic and acidic residues" evidence="6">
    <location>
        <begin position="14"/>
        <end position="28"/>
    </location>
</feature>
<feature type="binding site" evidence="3">
    <location>
        <begin position="361"/>
        <end position="363"/>
    </location>
    <ligand>
        <name>L-aspartate</name>
        <dbReference type="ChEBI" id="CHEBI:29991"/>
    </ligand>
</feature>
<feature type="binding site" evidence="1">
    <location>
        <position position="392"/>
    </location>
    <ligand>
        <name>Na(+)</name>
        <dbReference type="ChEBI" id="CHEBI:29101"/>
        <label>1</label>
    </ligand>
</feature>
<feature type="binding site" evidence="3">
    <location>
        <position position="394"/>
    </location>
    <ligand>
        <name>Na(+)</name>
        <dbReference type="ChEBI" id="CHEBI:29101"/>
        <label>2</label>
    </ligand>
</feature>
<feature type="binding site" evidence="1">
    <location>
        <position position="396"/>
    </location>
    <ligand>
        <name>Na(+)</name>
        <dbReference type="ChEBI" id="CHEBI:29101"/>
        <label>1</label>
    </ligand>
</feature>
<feature type="binding site" evidence="3">
    <location>
        <position position="400"/>
    </location>
    <ligand>
        <name>L-aspartate</name>
        <dbReference type="ChEBI" id="CHEBI:29991"/>
    </ligand>
</feature>
<feature type="binding site" evidence="3">
    <location>
        <begin position="441"/>
        <end position="445"/>
    </location>
    <ligand>
        <name>L-aspartate</name>
        <dbReference type="ChEBI" id="CHEBI:29991"/>
    </ligand>
</feature>
<feature type="binding site" evidence="3">
    <location>
        <position position="474"/>
    </location>
    <ligand>
        <name>L-aspartate</name>
        <dbReference type="ChEBI" id="CHEBI:29991"/>
    </ligand>
</feature>
<feature type="binding site" evidence="3">
    <location>
        <position position="481"/>
    </location>
    <ligand>
        <name>L-aspartate</name>
        <dbReference type="ChEBI" id="CHEBI:29991"/>
    </ligand>
</feature>
<feature type="binding site" evidence="1">
    <location>
        <position position="481"/>
    </location>
    <ligand>
        <name>Na(+)</name>
        <dbReference type="ChEBI" id="CHEBI:29101"/>
        <label>1</label>
    </ligand>
</feature>
<feature type="binding site" evidence="1">
    <location>
        <position position="485"/>
    </location>
    <ligand>
        <name>Na(+)</name>
        <dbReference type="ChEBI" id="CHEBI:29101"/>
        <label>1</label>
    </ligand>
</feature>
<feature type="modified residue" description="Phosphoserine" evidence="2">
    <location>
        <position position="3"/>
    </location>
</feature>
<feature type="modified residue" description="Phosphoserine" evidence="2">
    <location>
        <position position="21"/>
    </location>
</feature>
<feature type="modified residue" description="Phosphoserine" evidence="18">
    <location>
        <position position="24"/>
    </location>
</feature>
<feature type="modified residue" description="Phosphoserine" evidence="2">
    <location>
        <position position="25"/>
    </location>
</feature>
<feature type="modified residue" description="Phosphoserine" evidence="18">
    <location>
        <position position="505"/>
    </location>
</feature>
<feature type="modified residue" description="Phosphoserine" evidence="18">
    <location>
        <position position="520"/>
    </location>
</feature>
<feature type="modified residue" description="Phosphoserine" evidence="18">
    <location>
        <position position="530"/>
    </location>
</feature>
<feature type="modified residue" description="Phosphoserine" evidence="18">
    <location>
        <position position="532"/>
    </location>
</feature>
<feature type="modified residue" description="Phosphotyrosine" evidence="17">
    <location>
        <position position="537"/>
    </location>
</feature>
<feature type="modified residue" description="Phosphoserine" evidence="18">
    <location>
        <position position="542"/>
    </location>
</feature>
<feature type="modified residue" description="Phosphoserine" evidence="18">
    <location>
        <position position="558"/>
    </location>
</feature>
<feature type="modified residue" description="Phosphoserine" evidence="18">
    <location>
        <position position="562"/>
    </location>
</feature>
<feature type="lipid moiety-binding region" description="S-palmitoyl cysteine" evidence="8">
    <location>
        <position position="38"/>
    </location>
</feature>
<feature type="glycosylation site" description="N-linked (GlcNAc...) asparagine" evidence="5">
    <location>
        <position position="205"/>
    </location>
</feature>
<feature type="glycosylation site" description="N-linked (GlcNAc...) asparagine" evidence="5">
    <location>
        <position position="215"/>
    </location>
</feature>
<feature type="splice variant" id="VSP_006264" description="In isoform Glt-1A and isoform Glt-1B." evidence="15">
    <original>MASTEG</original>
    <variation>MVS</variation>
    <location>
        <begin position="1"/>
        <end position="6"/>
    </location>
</feature>
<feature type="splice variant" id="VSP_006265" description="In isoform Glt-1B." evidence="15">
    <original>TLAANGKSADCSVEEEPWKREK</original>
    <variation>PFPFLDIETCI</variation>
    <location>
        <begin position="551"/>
        <end position="572"/>
    </location>
</feature>
<feature type="mutagenesis site" description="Severely impairs glutamate uptake activity." evidence="8">
    <original>C</original>
    <variation>S</variation>
    <location>
        <position position="38"/>
    </location>
</feature>
<feature type="sequence conflict" description="In Ref. 3; AAA91643." evidence="15" ref="3">
    <original>D</original>
    <variation>E</variation>
    <location>
        <position position="26"/>
    </location>
</feature>
<feature type="sequence conflict" description="In Ref. 3; AAA91643." evidence="15" ref="3">
    <original>G</original>
    <variation>R</variation>
    <location>
        <position position="62"/>
    </location>
</feature>
<feature type="sequence conflict" description="In Ref. 3; AAA91643." evidence="15" ref="3">
    <original>A</original>
    <variation>V</variation>
    <location>
        <position position="112"/>
    </location>
</feature>
<feature type="sequence conflict" description="In Ref. 4; AAB71737." evidence="15" ref="4">
    <original>T</original>
    <variation>I</variation>
    <location>
        <position position="454"/>
    </location>
</feature>
<feature type="sequence conflict" description="In Ref. 4; AAB71737." evidence="15" ref="4">
    <original>K</original>
    <variation>L</variation>
    <location>
        <position position="525"/>
    </location>
</feature>
<feature type="sequence conflict" description="In Ref. 3; AAA91643." evidence="15" ref="3">
    <original>K</original>
    <variation>EFD</variation>
    <location>
        <position position="572"/>
    </location>
</feature>
<reference key="1">
    <citation type="journal article" date="1994" name="Genomics">
        <title>Mouse excitatory amino acid transporter EAAT2: isolation, characterization, and proximity to neuroexcitability loci on mouse chromosome 2.</title>
        <authorList>
            <person name="Kirschner M.A."/>
            <person name="Copeland N.G."/>
            <person name="Gilbert D.J."/>
            <person name="Jenkins N.A."/>
            <person name="Amara S.G."/>
        </authorList>
    </citation>
    <scope>NUCLEOTIDE SEQUENCE [MRNA]</scope>
    <scope>FUNCTION</scope>
    <scope>SUBCELLULAR LOCATION</scope>
    <scope>TISSUE SPECIFICITY</scope>
    <source>
        <strain>C57BL/6J</strain>
        <tissue>Brain</tissue>
    </source>
</reference>
<reference key="2">
    <citation type="journal article" date="1995" name="Biochim. Biophys. Acta">
        <title>Molecular cloning of two glutamate transporter subtypes from mouse brain.</title>
        <authorList>
            <person name="Mukainaka Y."/>
            <person name="Tanaka K."/>
            <person name="Hagiwara T."/>
            <person name="Wada K."/>
        </authorList>
    </citation>
    <scope>NUCLEOTIDE SEQUENCE [MRNA]</scope>
    <source>
        <strain>JCL:ICR</strain>
        <tissue>Cerebellum</tissue>
    </source>
</reference>
<reference key="3">
    <citation type="journal article" date="1995" name="Gene">
        <title>Molecular characterization of a high-affinity mouse glutamate transporter.</title>
        <authorList>
            <person name="Sutherland M.L."/>
            <person name="Delaney T.A."/>
            <person name="Noebels J.L."/>
        </authorList>
    </citation>
    <scope>NUCLEOTIDE SEQUENCE [MRNA]</scope>
    <scope>FUNCTION</scope>
    <scope>SUBCELLULAR LOCATION</scope>
    <scope>TISSUE SPECIFICITY</scope>
    <source>
        <strain>C57BL/6J</strain>
        <tissue>Brain</tissue>
    </source>
</reference>
<reference key="4">
    <citation type="submission" date="1997-10" db="EMBL/GenBank/DDBJ databases">
        <authorList>
            <person name="Peng J.-B."/>
            <person name="Guo L.-H."/>
        </authorList>
    </citation>
    <scope>NUCLEOTIDE SEQUENCE [MRNA]</scope>
    <source>
        <tissue>Brain</tissue>
    </source>
</reference>
<reference key="5">
    <citation type="journal article" date="1997" name="FEBS Lett.">
        <title>Tissue specific variants of glutamate transporter GLT-1.</title>
        <authorList>
            <person name="Utsunomiya-Tate N."/>
            <person name="Endou H."/>
            <person name="Kanai Y."/>
        </authorList>
    </citation>
    <scope>NUCLEOTIDE SEQUENCE [MRNA]</scope>
    <scope>ALTERNATIVE SPLICING</scope>
    <scope>TISSUE SPECIFICITY</scope>
    <source>
        <strain>JCL:ICR</strain>
        <tissue>Brain</tissue>
        <tissue>Liver</tissue>
    </source>
</reference>
<reference key="6">
    <citation type="submission" date="2007-04" db="UniProtKB">
        <authorList>
            <person name="Lubec G."/>
            <person name="Kang S.U."/>
        </authorList>
    </citation>
    <scope>PROTEIN SEQUENCE OF 66-87; 159-173 AND 478-525</scope>
    <scope>IDENTIFICATION BY MASS SPECTROMETRY</scope>
    <source>
        <strain>C57BL/6J</strain>
        <tissue>Brain</tissue>
    </source>
</reference>
<reference key="7">
    <citation type="journal article" date="1997" name="Science">
        <title>Epilepsy and exacerbation of brain injury in mice lacking the glutamate transporter GLT-1.</title>
        <authorList>
            <person name="Tanaka K."/>
            <person name="Watase K."/>
            <person name="Manabe T."/>
            <person name="Yamada K."/>
            <person name="Watanabe M."/>
            <person name="Takahashi K."/>
            <person name="Iwama H."/>
            <person name="Nishikawa T."/>
            <person name="Ichihara N."/>
            <person name="Kikuchi T."/>
            <person name="Okuyama S."/>
            <person name="Kawashima N."/>
            <person name="Hori S."/>
            <person name="Takimoto M."/>
            <person name="Wada K."/>
        </authorList>
    </citation>
    <scope>DISRUPTION PHENOTYPE</scope>
    <scope>FUNCTION</scope>
    <scope>TISSUE SPECIFICITY</scope>
</reference>
<reference key="8">
    <citation type="journal article" date="2006" name="Proc. Natl. Acad. Sci. U.S.A.">
        <title>Indispensability of the glutamate transporters GLAST and GLT1 to brain development.</title>
        <authorList>
            <person name="Matsugami T.R."/>
            <person name="Tanemura K."/>
            <person name="Mieda M."/>
            <person name="Nakatomi R."/>
            <person name="Yamada K."/>
            <person name="Kondo T."/>
            <person name="Ogawa M."/>
            <person name="Obata K."/>
            <person name="Watanabe M."/>
            <person name="Hashikawa T."/>
            <person name="Tanaka K."/>
        </authorList>
    </citation>
    <scope>DISRUPTION PHENOTYPE</scope>
    <scope>TISSUE SPECIFICITY</scope>
</reference>
<reference key="9">
    <citation type="journal article" date="2008" name="J. Proteome Res.">
        <title>Large-scale identification and evolution indexing of tyrosine phosphorylation sites from murine brain.</title>
        <authorList>
            <person name="Ballif B.A."/>
            <person name="Carey G.R."/>
            <person name="Sunyaev S.R."/>
            <person name="Gygi S.P."/>
        </authorList>
    </citation>
    <scope>PHOSPHORYLATION [LARGE SCALE ANALYSIS] AT TYR-537</scope>
    <scope>IDENTIFICATION BY MASS SPECTROMETRY [LARGE SCALE ANALYSIS]</scope>
    <source>
        <tissue>Brain</tissue>
    </source>
</reference>
<reference key="10">
    <citation type="journal article" date="2010" name="Cell">
        <title>A tissue-specific atlas of mouse protein phosphorylation and expression.</title>
        <authorList>
            <person name="Huttlin E.L."/>
            <person name="Jedrychowski M.P."/>
            <person name="Elias J.E."/>
            <person name="Goswami T."/>
            <person name="Rad R."/>
            <person name="Beausoleil S.A."/>
            <person name="Villen J."/>
            <person name="Haas W."/>
            <person name="Sowa M.E."/>
            <person name="Gygi S.P."/>
        </authorList>
    </citation>
    <scope>PHOSPHORYLATION [LARGE SCALE ANALYSIS] AT SER-24; SER-505; SER-520; SER-530; SER-532; SER-542; SER-558 AND SER-562</scope>
    <scope>IDENTIFICATION BY MASS SPECTROMETRY [LARGE SCALE ANALYSIS]</scope>
    <source>
        <tissue>Brain</tissue>
        <tissue>Liver</tissue>
    </source>
</reference>
<reference key="11">
    <citation type="journal article" date="2010" name="Neurobiol. Dis.">
        <title>Palmitoylation and function of glial glutamate transporter-1 is reduced in the YAC128 mouse model of Huntington disease.</title>
        <authorList>
            <person name="Huang K."/>
            <person name="Kang M.H."/>
            <person name="Askew C."/>
            <person name="Kang R."/>
            <person name="Sanders S.S."/>
            <person name="Wan J."/>
            <person name="Davis N.G."/>
            <person name="Hayden M.R."/>
        </authorList>
    </citation>
    <scope>PALMITOYLATION AT CYS-38</scope>
    <scope>MUTAGENESIS OF CYS-38</scope>
</reference>